<feature type="chain" id="PRO_1000016947" description="Ribose-5-phosphate isomerase A">
    <location>
        <begin position="1"/>
        <end position="234"/>
    </location>
</feature>
<feature type="active site" description="Proton acceptor" evidence="1">
    <location>
        <position position="114"/>
    </location>
</feature>
<feature type="binding site" evidence="1">
    <location>
        <begin position="35"/>
        <end position="38"/>
    </location>
    <ligand>
        <name>substrate</name>
    </ligand>
</feature>
<feature type="binding site" evidence="1">
    <location>
        <begin position="91"/>
        <end position="94"/>
    </location>
    <ligand>
        <name>substrate</name>
    </ligand>
</feature>
<feature type="binding site" evidence="1">
    <location>
        <begin position="105"/>
        <end position="108"/>
    </location>
    <ligand>
        <name>substrate</name>
    </ligand>
</feature>
<feature type="binding site" evidence="1">
    <location>
        <position position="132"/>
    </location>
    <ligand>
        <name>substrate</name>
    </ligand>
</feature>
<organism>
    <name type="scientific">Methanococcus aeolicus (strain ATCC BAA-1280 / DSM 17508 / OCM 812 / Nankai-3)</name>
    <dbReference type="NCBI Taxonomy" id="419665"/>
    <lineage>
        <taxon>Archaea</taxon>
        <taxon>Methanobacteriati</taxon>
        <taxon>Methanobacteriota</taxon>
        <taxon>Methanomada group</taxon>
        <taxon>Methanococci</taxon>
        <taxon>Methanococcales</taxon>
        <taxon>Methanococcaceae</taxon>
        <taxon>Methanococcus</taxon>
    </lineage>
</organism>
<comment type="function">
    <text evidence="1">Catalyzes the reversible conversion of ribose-5-phosphate to ribulose 5-phosphate.</text>
</comment>
<comment type="catalytic activity">
    <reaction evidence="1">
        <text>aldehydo-D-ribose 5-phosphate = D-ribulose 5-phosphate</text>
        <dbReference type="Rhea" id="RHEA:14657"/>
        <dbReference type="ChEBI" id="CHEBI:58121"/>
        <dbReference type="ChEBI" id="CHEBI:58273"/>
        <dbReference type="EC" id="5.3.1.6"/>
    </reaction>
</comment>
<comment type="pathway">
    <text evidence="1">Carbohydrate degradation; pentose phosphate pathway; D-ribose 5-phosphate from D-ribulose 5-phosphate (non-oxidative stage): step 1/1.</text>
</comment>
<comment type="subunit">
    <text evidence="1">Homodimer.</text>
</comment>
<comment type="similarity">
    <text evidence="1">Belongs to the ribose 5-phosphate isomerase family.</text>
</comment>
<keyword id="KW-0413">Isomerase</keyword>
<evidence type="ECO:0000255" key="1">
    <source>
        <dbReference type="HAMAP-Rule" id="MF_00170"/>
    </source>
</evidence>
<name>RPIA_META3</name>
<gene>
    <name evidence="1" type="primary">rpiA</name>
    <name type="ordered locus">Maeo_0737</name>
</gene>
<reference key="1">
    <citation type="submission" date="2007-06" db="EMBL/GenBank/DDBJ databases">
        <title>Complete sequence of Methanococcus aeolicus Nankai-3.</title>
        <authorList>
            <consortium name="US DOE Joint Genome Institute"/>
            <person name="Copeland A."/>
            <person name="Lucas S."/>
            <person name="Lapidus A."/>
            <person name="Barry K."/>
            <person name="Glavina del Rio T."/>
            <person name="Dalin E."/>
            <person name="Tice H."/>
            <person name="Pitluck S."/>
            <person name="Chain P."/>
            <person name="Malfatti S."/>
            <person name="Shin M."/>
            <person name="Vergez L."/>
            <person name="Schmutz J."/>
            <person name="Larimer F."/>
            <person name="Land M."/>
            <person name="Hauser L."/>
            <person name="Kyrpides N."/>
            <person name="Lykidis A."/>
            <person name="Sieprawska-Lupa M."/>
            <person name="Whitman W.B."/>
            <person name="Richardson P."/>
        </authorList>
    </citation>
    <scope>NUCLEOTIDE SEQUENCE [LARGE SCALE GENOMIC DNA]</scope>
    <source>
        <strain>ATCC BAA-1280 / DSM 17508 / OCM 812 / Nankai-3</strain>
    </source>
</reference>
<dbReference type="EC" id="5.3.1.6" evidence="1"/>
<dbReference type="EMBL" id="CP000743">
    <property type="protein sequence ID" value="ABR56320.1"/>
    <property type="molecule type" value="Genomic_DNA"/>
</dbReference>
<dbReference type="RefSeq" id="WP_011973452.1">
    <property type="nucleotide sequence ID" value="NC_009635.1"/>
</dbReference>
<dbReference type="SMR" id="A6UUZ8"/>
<dbReference type="STRING" id="419665.Maeo_0737"/>
<dbReference type="GeneID" id="5327653"/>
<dbReference type="GeneID" id="75305813"/>
<dbReference type="KEGG" id="mae:Maeo_0737"/>
<dbReference type="eggNOG" id="arCOG01122">
    <property type="taxonomic scope" value="Archaea"/>
</dbReference>
<dbReference type="HOGENOM" id="CLU_056590_1_1_2"/>
<dbReference type="OrthoDB" id="19013at2157"/>
<dbReference type="UniPathway" id="UPA00115">
    <property type="reaction ID" value="UER00412"/>
</dbReference>
<dbReference type="Proteomes" id="UP000001106">
    <property type="component" value="Chromosome"/>
</dbReference>
<dbReference type="GO" id="GO:0005829">
    <property type="term" value="C:cytosol"/>
    <property type="evidence" value="ECO:0007669"/>
    <property type="project" value="TreeGrafter"/>
</dbReference>
<dbReference type="GO" id="GO:0004751">
    <property type="term" value="F:ribose-5-phosphate isomerase activity"/>
    <property type="evidence" value="ECO:0007669"/>
    <property type="project" value="UniProtKB-UniRule"/>
</dbReference>
<dbReference type="GO" id="GO:0006014">
    <property type="term" value="P:D-ribose metabolic process"/>
    <property type="evidence" value="ECO:0007669"/>
    <property type="project" value="TreeGrafter"/>
</dbReference>
<dbReference type="GO" id="GO:0009052">
    <property type="term" value="P:pentose-phosphate shunt, non-oxidative branch"/>
    <property type="evidence" value="ECO:0007669"/>
    <property type="project" value="UniProtKB-UniRule"/>
</dbReference>
<dbReference type="CDD" id="cd01398">
    <property type="entry name" value="RPI_A"/>
    <property type="match status" value="1"/>
</dbReference>
<dbReference type="FunFam" id="3.30.70.260:FF:000018">
    <property type="entry name" value="Ribose-5-phosphate isomerase A"/>
    <property type="match status" value="1"/>
</dbReference>
<dbReference type="FunFam" id="3.40.50.1360:FF:000001">
    <property type="entry name" value="Ribose-5-phosphate isomerase A"/>
    <property type="match status" value="1"/>
</dbReference>
<dbReference type="Gene3D" id="3.30.70.260">
    <property type="match status" value="1"/>
</dbReference>
<dbReference type="Gene3D" id="3.40.50.1360">
    <property type="match status" value="1"/>
</dbReference>
<dbReference type="HAMAP" id="MF_00170">
    <property type="entry name" value="Rib_5P_isom_A"/>
    <property type="match status" value="1"/>
</dbReference>
<dbReference type="InterPro" id="IPR037171">
    <property type="entry name" value="NagB/RpiA_transferase-like"/>
</dbReference>
<dbReference type="InterPro" id="IPR020672">
    <property type="entry name" value="Ribose5P_isomerase_typA_subgr"/>
</dbReference>
<dbReference type="InterPro" id="IPR004788">
    <property type="entry name" value="Ribose5P_isomerase_type_A"/>
</dbReference>
<dbReference type="NCBIfam" id="NF001924">
    <property type="entry name" value="PRK00702.1"/>
    <property type="match status" value="1"/>
</dbReference>
<dbReference type="NCBIfam" id="TIGR00021">
    <property type="entry name" value="rpiA"/>
    <property type="match status" value="1"/>
</dbReference>
<dbReference type="PANTHER" id="PTHR11934">
    <property type="entry name" value="RIBOSE-5-PHOSPHATE ISOMERASE"/>
    <property type="match status" value="1"/>
</dbReference>
<dbReference type="PANTHER" id="PTHR11934:SF0">
    <property type="entry name" value="RIBOSE-5-PHOSPHATE ISOMERASE"/>
    <property type="match status" value="1"/>
</dbReference>
<dbReference type="Pfam" id="PF06026">
    <property type="entry name" value="Rib_5-P_isom_A"/>
    <property type="match status" value="1"/>
</dbReference>
<dbReference type="SUPFAM" id="SSF75445">
    <property type="entry name" value="D-ribose-5-phosphate isomerase (RpiA), lid domain"/>
    <property type="match status" value="1"/>
</dbReference>
<dbReference type="SUPFAM" id="SSF100950">
    <property type="entry name" value="NagB/RpiA/CoA transferase-like"/>
    <property type="match status" value="1"/>
</dbReference>
<proteinExistence type="inferred from homology"/>
<accession>A6UUZ8</accession>
<sequence>MARKKAVKVEADPRLNAVNEALKFIKDGMIVGLGSGTTANLFIAELGKKISEEGLNVFGVPTSFESRMMAIQYGIPLVSLDEYGELDIAVDGADEVNKETLNVIKGGGGCHTQEKIIDYCAKELIIIVDESKLVDSLGENTPVPLEVLPFAYSSVLNELLKMNSAPSIRMADKKMGPVITDNGNMIIDVFIDLNNPEEVEKQLNNIPGVVENGIFTKVDKVIVGKSDKAEILKK</sequence>
<protein>
    <recommendedName>
        <fullName evidence="1">Ribose-5-phosphate isomerase A</fullName>
        <ecNumber evidence="1">5.3.1.6</ecNumber>
    </recommendedName>
    <alternativeName>
        <fullName evidence="1">Phosphoriboisomerase A</fullName>
        <shortName evidence="1">PRI</shortName>
    </alternativeName>
</protein>